<keyword id="KW-0472">Membrane</keyword>
<keyword id="KW-1185">Reference proteome</keyword>
<keyword id="KW-0812">Transmembrane</keyword>
<keyword id="KW-1133">Transmembrane helix</keyword>
<organism>
    <name type="scientific">Staphylococcus saprophyticus subsp. saprophyticus (strain ATCC 15305 / DSM 20229 / NCIMB 8711 / NCTC 7292 / S-41)</name>
    <dbReference type="NCBI Taxonomy" id="342451"/>
    <lineage>
        <taxon>Bacteria</taxon>
        <taxon>Bacillati</taxon>
        <taxon>Bacillota</taxon>
        <taxon>Bacilli</taxon>
        <taxon>Bacillales</taxon>
        <taxon>Staphylococcaceae</taxon>
        <taxon>Staphylococcus</taxon>
    </lineage>
</organism>
<protein>
    <recommendedName>
        <fullName evidence="1">UPF0154 protein SSP1415</fullName>
    </recommendedName>
</protein>
<proteinExistence type="inferred from homology"/>
<evidence type="ECO:0000255" key="1">
    <source>
        <dbReference type="HAMAP-Rule" id="MF_00363"/>
    </source>
</evidence>
<sequence>MATWLAIVLIVLALILGLVGGFFLARKYMMDYLKKNPPINEEMLRMMMMQMGQKPSQKKINQMMTMMNKNQQDQLKKSK</sequence>
<reference key="1">
    <citation type="journal article" date="2005" name="Proc. Natl. Acad. Sci. U.S.A.">
        <title>Whole genome sequence of Staphylococcus saprophyticus reveals the pathogenesis of uncomplicated urinary tract infection.</title>
        <authorList>
            <person name="Kuroda M."/>
            <person name="Yamashita A."/>
            <person name="Hirakawa H."/>
            <person name="Kumano M."/>
            <person name="Morikawa K."/>
            <person name="Higashide M."/>
            <person name="Maruyama A."/>
            <person name="Inose Y."/>
            <person name="Matoba K."/>
            <person name="Toh H."/>
            <person name="Kuhara S."/>
            <person name="Hattori M."/>
            <person name="Ohta T."/>
        </authorList>
    </citation>
    <scope>NUCLEOTIDE SEQUENCE [LARGE SCALE GENOMIC DNA]</scope>
    <source>
        <strain>ATCC 15305 / DSM 20229 / NCIMB 8711 / NCTC 7292 / S-41</strain>
    </source>
</reference>
<comment type="subcellular location">
    <subcellularLocation>
        <location evidence="1">Membrane</location>
        <topology evidence="1">Single-pass membrane protein</topology>
    </subcellularLocation>
</comment>
<comment type="similarity">
    <text evidence="1">Belongs to the UPF0154 family.</text>
</comment>
<name>Y1415_STAS1</name>
<dbReference type="EMBL" id="AP008934">
    <property type="protein sequence ID" value="BAE18560.1"/>
    <property type="molecule type" value="Genomic_DNA"/>
</dbReference>
<dbReference type="RefSeq" id="WP_011303187.1">
    <property type="nucleotide sequence ID" value="NZ_MTGA01000038.1"/>
</dbReference>
<dbReference type="SMR" id="Q49XD7"/>
<dbReference type="KEGG" id="ssp:SSP1415"/>
<dbReference type="PATRIC" id="fig|342451.11.peg.1418"/>
<dbReference type="eggNOG" id="COG3763">
    <property type="taxonomic scope" value="Bacteria"/>
</dbReference>
<dbReference type="HOGENOM" id="CLU_180108_0_1_9"/>
<dbReference type="Proteomes" id="UP000006371">
    <property type="component" value="Chromosome"/>
</dbReference>
<dbReference type="GO" id="GO:0005886">
    <property type="term" value="C:plasma membrane"/>
    <property type="evidence" value="ECO:0007669"/>
    <property type="project" value="UniProtKB-UniRule"/>
</dbReference>
<dbReference type="HAMAP" id="MF_00363">
    <property type="entry name" value="UPF0154"/>
    <property type="match status" value="1"/>
</dbReference>
<dbReference type="InterPro" id="IPR011992">
    <property type="entry name" value="EF-hand-dom_pair"/>
</dbReference>
<dbReference type="InterPro" id="IPR005359">
    <property type="entry name" value="UPF0154"/>
</dbReference>
<dbReference type="Pfam" id="PF03672">
    <property type="entry name" value="UPF0154"/>
    <property type="match status" value="1"/>
</dbReference>
<dbReference type="SUPFAM" id="SSF47473">
    <property type="entry name" value="EF-hand"/>
    <property type="match status" value="1"/>
</dbReference>
<feature type="chain" id="PRO_0000214982" description="UPF0154 protein SSP1415">
    <location>
        <begin position="1"/>
        <end position="79"/>
    </location>
</feature>
<feature type="transmembrane region" description="Helical" evidence="1">
    <location>
        <begin position="4"/>
        <end position="24"/>
    </location>
</feature>
<accession>Q49XD7</accession>
<gene>
    <name type="ordered locus">SSP1415</name>
</gene>